<organism>
    <name type="scientific">Thermosynechococcus vestitus (strain NIES-2133 / IAM M-273 / BP-1)</name>
    <dbReference type="NCBI Taxonomy" id="197221"/>
    <lineage>
        <taxon>Bacteria</taxon>
        <taxon>Bacillati</taxon>
        <taxon>Cyanobacteriota</taxon>
        <taxon>Cyanophyceae</taxon>
        <taxon>Acaryochloridales</taxon>
        <taxon>Thermosynechococcaceae</taxon>
        <taxon>Thermosynechococcus</taxon>
    </lineage>
</organism>
<name>URE1_THEVB</name>
<feature type="chain" id="PRO_0000234189" description="Urease subunit alpha">
    <location>
        <begin position="1"/>
        <end position="572"/>
    </location>
</feature>
<feature type="domain" description="Urease" evidence="1">
    <location>
        <begin position="131"/>
        <end position="572"/>
    </location>
</feature>
<feature type="active site" description="Proton donor" evidence="1">
    <location>
        <position position="322"/>
    </location>
</feature>
<feature type="binding site" evidence="1">
    <location>
        <position position="136"/>
    </location>
    <ligand>
        <name>Ni(2+)</name>
        <dbReference type="ChEBI" id="CHEBI:49786"/>
        <label>1</label>
    </ligand>
</feature>
<feature type="binding site" evidence="1">
    <location>
        <position position="138"/>
    </location>
    <ligand>
        <name>Ni(2+)</name>
        <dbReference type="ChEBI" id="CHEBI:49786"/>
        <label>1</label>
    </ligand>
</feature>
<feature type="binding site" description="via carbamate group" evidence="1">
    <location>
        <position position="219"/>
    </location>
    <ligand>
        <name>Ni(2+)</name>
        <dbReference type="ChEBI" id="CHEBI:49786"/>
        <label>1</label>
    </ligand>
</feature>
<feature type="binding site" description="via carbamate group" evidence="1">
    <location>
        <position position="219"/>
    </location>
    <ligand>
        <name>Ni(2+)</name>
        <dbReference type="ChEBI" id="CHEBI:49786"/>
        <label>2</label>
    </ligand>
</feature>
<feature type="binding site" evidence="1">
    <location>
        <position position="221"/>
    </location>
    <ligand>
        <name>substrate</name>
    </ligand>
</feature>
<feature type="binding site" evidence="1">
    <location>
        <position position="248"/>
    </location>
    <ligand>
        <name>Ni(2+)</name>
        <dbReference type="ChEBI" id="CHEBI:49786"/>
        <label>2</label>
    </ligand>
</feature>
<feature type="binding site" evidence="1">
    <location>
        <position position="274"/>
    </location>
    <ligand>
        <name>Ni(2+)</name>
        <dbReference type="ChEBI" id="CHEBI:49786"/>
        <label>2</label>
    </ligand>
</feature>
<feature type="binding site" evidence="1">
    <location>
        <position position="362"/>
    </location>
    <ligand>
        <name>Ni(2+)</name>
        <dbReference type="ChEBI" id="CHEBI:49786"/>
        <label>1</label>
    </ligand>
</feature>
<feature type="modified residue" description="N6-carboxylysine" evidence="1">
    <location>
        <position position="219"/>
    </location>
</feature>
<gene>
    <name evidence="1" type="primary">ureC</name>
    <name type="ordered locus">tlr0005</name>
</gene>
<dbReference type="EC" id="3.5.1.5" evidence="1"/>
<dbReference type="EMBL" id="BA000039">
    <property type="protein sequence ID" value="BAC07558.1"/>
    <property type="molecule type" value="Genomic_DNA"/>
</dbReference>
<dbReference type="RefSeq" id="NP_680796.1">
    <property type="nucleotide sequence ID" value="NC_004113.1"/>
</dbReference>
<dbReference type="RefSeq" id="WP_011055860.1">
    <property type="nucleotide sequence ID" value="NC_004113.1"/>
</dbReference>
<dbReference type="SMR" id="Q8DMV6"/>
<dbReference type="STRING" id="197221.gene:10746583"/>
<dbReference type="MEROPS" id="M38.982"/>
<dbReference type="EnsemblBacteria" id="BAC07558">
    <property type="protein sequence ID" value="BAC07558"/>
    <property type="gene ID" value="BAC07558"/>
</dbReference>
<dbReference type="KEGG" id="tel:tlr0005"/>
<dbReference type="PATRIC" id="fig|197221.4.peg.4"/>
<dbReference type="eggNOG" id="COG0804">
    <property type="taxonomic scope" value="Bacteria"/>
</dbReference>
<dbReference type="UniPathway" id="UPA00258">
    <property type="reaction ID" value="UER00370"/>
</dbReference>
<dbReference type="Proteomes" id="UP000000440">
    <property type="component" value="Chromosome"/>
</dbReference>
<dbReference type="GO" id="GO:0005737">
    <property type="term" value="C:cytoplasm"/>
    <property type="evidence" value="ECO:0007669"/>
    <property type="project" value="UniProtKB-SubCell"/>
</dbReference>
<dbReference type="GO" id="GO:0016151">
    <property type="term" value="F:nickel cation binding"/>
    <property type="evidence" value="ECO:0007669"/>
    <property type="project" value="UniProtKB-UniRule"/>
</dbReference>
<dbReference type="GO" id="GO:0009039">
    <property type="term" value="F:urease activity"/>
    <property type="evidence" value="ECO:0007669"/>
    <property type="project" value="UniProtKB-UniRule"/>
</dbReference>
<dbReference type="GO" id="GO:0043419">
    <property type="term" value="P:urea catabolic process"/>
    <property type="evidence" value="ECO:0007669"/>
    <property type="project" value="UniProtKB-UniRule"/>
</dbReference>
<dbReference type="CDD" id="cd00375">
    <property type="entry name" value="Urease_alpha"/>
    <property type="match status" value="1"/>
</dbReference>
<dbReference type="Gene3D" id="3.20.20.140">
    <property type="entry name" value="Metal-dependent hydrolases"/>
    <property type="match status" value="1"/>
</dbReference>
<dbReference type="Gene3D" id="2.30.40.10">
    <property type="entry name" value="Urease, subunit C, domain 1"/>
    <property type="match status" value="1"/>
</dbReference>
<dbReference type="HAMAP" id="MF_01953">
    <property type="entry name" value="Urease_alpha"/>
    <property type="match status" value="1"/>
</dbReference>
<dbReference type="InterPro" id="IPR006680">
    <property type="entry name" value="Amidohydro-rel"/>
</dbReference>
<dbReference type="InterPro" id="IPR011059">
    <property type="entry name" value="Metal-dep_hydrolase_composite"/>
</dbReference>
<dbReference type="InterPro" id="IPR032466">
    <property type="entry name" value="Metal_Hydrolase"/>
</dbReference>
<dbReference type="InterPro" id="IPR011612">
    <property type="entry name" value="Urease_alpha_N_dom"/>
</dbReference>
<dbReference type="InterPro" id="IPR050112">
    <property type="entry name" value="Urease_alpha_subunit"/>
</dbReference>
<dbReference type="InterPro" id="IPR017950">
    <property type="entry name" value="Urease_AS"/>
</dbReference>
<dbReference type="InterPro" id="IPR005848">
    <property type="entry name" value="Urease_asu"/>
</dbReference>
<dbReference type="InterPro" id="IPR017951">
    <property type="entry name" value="Urease_asu_c"/>
</dbReference>
<dbReference type="InterPro" id="IPR029754">
    <property type="entry name" value="Urease_Ni-bd"/>
</dbReference>
<dbReference type="NCBIfam" id="NF009685">
    <property type="entry name" value="PRK13206.1"/>
    <property type="match status" value="1"/>
</dbReference>
<dbReference type="NCBIfam" id="NF009686">
    <property type="entry name" value="PRK13207.1"/>
    <property type="match status" value="1"/>
</dbReference>
<dbReference type="NCBIfam" id="TIGR01792">
    <property type="entry name" value="urease_alph"/>
    <property type="match status" value="1"/>
</dbReference>
<dbReference type="PANTHER" id="PTHR43440">
    <property type="entry name" value="UREASE"/>
    <property type="match status" value="1"/>
</dbReference>
<dbReference type="PANTHER" id="PTHR43440:SF1">
    <property type="entry name" value="UREASE"/>
    <property type="match status" value="1"/>
</dbReference>
<dbReference type="Pfam" id="PF01979">
    <property type="entry name" value="Amidohydro_1"/>
    <property type="match status" value="1"/>
</dbReference>
<dbReference type="Pfam" id="PF00449">
    <property type="entry name" value="Urease_alpha"/>
    <property type="match status" value="1"/>
</dbReference>
<dbReference type="PRINTS" id="PR01752">
    <property type="entry name" value="UREASE"/>
</dbReference>
<dbReference type="SUPFAM" id="SSF51338">
    <property type="entry name" value="Composite domain of metallo-dependent hydrolases"/>
    <property type="match status" value="2"/>
</dbReference>
<dbReference type="SUPFAM" id="SSF51556">
    <property type="entry name" value="Metallo-dependent hydrolases"/>
    <property type="match status" value="1"/>
</dbReference>
<dbReference type="PROSITE" id="PS01120">
    <property type="entry name" value="UREASE_1"/>
    <property type="match status" value="1"/>
</dbReference>
<dbReference type="PROSITE" id="PS00145">
    <property type="entry name" value="UREASE_2"/>
    <property type="match status" value="1"/>
</dbReference>
<dbReference type="PROSITE" id="PS51368">
    <property type="entry name" value="UREASE_3"/>
    <property type="match status" value="1"/>
</dbReference>
<reference key="1">
    <citation type="journal article" date="2002" name="DNA Res.">
        <title>Complete genome structure of the thermophilic cyanobacterium Thermosynechococcus elongatus BP-1.</title>
        <authorList>
            <person name="Nakamura Y."/>
            <person name="Kaneko T."/>
            <person name="Sato S."/>
            <person name="Ikeuchi M."/>
            <person name="Katoh H."/>
            <person name="Sasamoto S."/>
            <person name="Watanabe A."/>
            <person name="Iriguchi M."/>
            <person name="Kawashima K."/>
            <person name="Kimura T."/>
            <person name="Kishida Y."/>
            <person name="Kiyokawa C."/>
            <person name="Kohara M."/>
            <person name="Matsumoto M."/>
            <person name="Matsuno A."/>
            <person name="Nakazaki N."/>
            <person name="Shimpo S."/>
            <person name="Sugimoto M."/>
            <person name="Takeuchi C."/>
            <person name="Yamada M."/>
            <person name="Tabata S."/>
        </authorList>
    </citation>
    <scope>NUCLEOTIDE SEQUENCE [LARGE SCALE GENOMIC DNA]</scope>
    <source>
        <strain>NIES-2133 / IAM M-273 / BP-1</strain>
    </source>
</reference>
<accession>Q8DMV6</accession>
<sequence length="572" mass="61786">MSYRIDRQTYAETYGPTVGDRLRLADTDLIIEIEHDYTHYGDEVKFGGGKVIRDGMGQSPIANAEGAVDVVITNAVILDWWGVVKADVGIKDGKIYKIGKAGNPYTQEGVDIIIGPGTEAIAGEGMILTAGGIDAHIHFICPQQIATAIAAGITTMIGGGTGPATGTNATTCTPGPWNIYRMLQAADAFPVNLGFLGKGNSSQPQGLIEQVQAGVVGLKLHEDWGSTPNAIDTCLSVAEDYDIQVAIHTDTLNESGFVEDTIAAFKNRTIHAYHTEGAGGGHAPDIIKLCGQANVLPSSTNPTRPYTVNTLDEHLDMLMVCHHLDPSIPEDVAFAESRIRRETIAAEDILHDLGAFSIISSDSQAMGRVGESIIRTWQTAHKMKVQRGHLRDPQRPGVDHDNFRARRYVAKYTINPAITHGIAEYVGSVEVGKIADLCLWKPAFFGVKPELVIKGGVIAYAQMGDANASIPTPQPVHMQPMFASYGGCRTTTSVTFMSQAGIANNIPEQLGLQKTVLPVGHIRQLRKADLKLNDYLPHIEVDPETYEVRADGELLTCEPATVLPLAQRYFLF</sequence>
<keyword id="KW-0963">Cytoplasm</keyword>
<keyword id="KW-0378">Hydrolase</keyword>
<keyword id="KW-0479">Metal-binding</keyword>
<keyword id="KW-0533">Nickel</keyword>
<keyword id="KW-1185">Reference proteome</keyword>
<protein>
    <recommendedName>
        <fullName evidence="1">Urease subunit alpha</fullName>
        <ecNumber evidence="1">3.5.1.5</ecNumber>
    </recommendedName>
    <alternativeName>
        <fullName evidence="1">Urea amidohydrolase subunit alpha</fullName>
    </alternativeName>
</protein>
<comment type="catalytic activity">
    <reaction evidence="1">
        <text>urea + 2 H2O + H(+) = hydrogencarbonate + 2 NH4(+)</text>
        <dbReference type="Rhea" id="RHEA:20557"/>
        <dbReference type="ChEBI" id="CHEBI:15377"/>
        <dbReference type="ChEBI" id="CHEBI:15378"/>
        <dbReference type="ChEBI" id="CHEBI:16199"/>
        <dbReference type="ChEBI" id="CHEBI:17544"/>
        <dbReference type="ChEBI" id="CHEBI:28938"/>
        <dbReference type="EC" id="3.5.1.5"/>
    </reaction>
</comment>
<comment type="cofactor">
    <cofactor evidence="1">
        <name>Ni cation</name>
        <dbReference type="ChEBI" id="CHEBI:25516"/>
    </cofactor>
    <text evidence="1">Binds 2 nickel ions per subunit.</text>
</comment>
<comment type="pathway">
    <text evidence="1">Nitrogen metabolism; urea degradation; CO(2) and NH(3) from urea (urease route): step 1/1.</text>
</comment>
<comment type="subunit">
    <text evidence="1">Heterotrimer of UreA (gamma), UreB (beta) and UreC (alpha) subunits. Three heterotrimers associate to form the active enzyme.</text>
</comment>
<comment type="subcellular location">
    <subcellularLocation>
        <location evidence="1">Cytoplasm</location>
    </subcellularLocation>
</comment>
<comment type="PTM">
    <text evidence="1">Carboxylation allows a single lysine to coordinate two nickel ions.</text>
</comment>
<comment type="similarity">
    <text evidence="1">Belongs to the metallo-dependent hydrolases superfamily. Urease alpha subunit family.</text>
</comment>
<evidence type="ECO:0000255" key="1">
    <source>
        <dbReference type="HAMAP-Rule" id="MF_01953"/>
    </source>
</evidence>
<proteinExistence type="inferred from homology"/>